<dbReference type="EC" id="3.4.21.105" evidence="1"/>
<dbReference type="EMBL" id="CP000266">
    <property type="protein sequence ID" value="ABF05473.1"/>
    <property type="status" value="ALT_INIT"/>
    <property type="molecule type" value="Genomic_DNA"/>
</dbReference>
<dbReference type="RefSeq" id="WP_000928716.1">
    <property type="nucleotide sequence ID" value="NC_008258.1"/>
</dbReference>
<dbReference type="SMR" id="Q0SZP2"/>
<dbReference type="KEGG" id="sfv:SFV_3431"/>
<dbReference type="HOGENOM" id="CLU_058989_0_0_6"/>
<dbReference type="Proteomes" id="UP000000659">
    <property type="component" value="Chromosome"/>
</dbReference>
<dbReference type="GO" id="GO:0005886">
    <property type="term" value="C:plasma membrane"/>
    <property type="evidence" value="ECO:0007669"/>
    <property type="project" value="UniProtKB-SubCell"/>
</dbReference>
<dbReference type="GO" id="GO:0004252">
    <property type="term" value="F:serine-type endopeptidase activity"/>
    <property type="evidence" value="ECO:0007669"/>
    <property type="project" value="UniProtKB-UniRule"/>
</dbReference>
<dbReference type="GO" id="GO:0006508">
    <property type="term" value="P:proteolysis"/>
    <property type="evidence" value="ECO:0007669"/>
    <property type="project" value="UniProtKB-UniRule"/>
</dbReference>
<dbReference type="FunFam" id="1.20.1540.10:FF:000003">
    <property type="entry name" value="Rhomboid protease GlpG"/>
    <property type="match status" value="1"/>
</dbReference>
<dbReference type="FunFam" id="3.30.70.2350:FF:000001">
    <property type="entry name" value="Rhomboid protease GlpG"/>
    <property type="match status" value="1"/>
</dbReference>
<dbReference type="Gene3D" id="3.30.70.2350">
    <property type="match status" value="1"/>
</dbReference>
<dbReference type="Gene3D" id="1.20.1540.10">
    <property type="entry name" value="Rhomboid-like"/>
    <property type="match status" value="1"/>
</dbReference>
<dbReference type="HAMAP" id="MF_01594">
    <property type="entry name" value="Rhomboid_GlpG"/>
    <property type="match status" value="1"/>
</dbReference>
<dbReference type="InterPro" id="IPR038236">
    <property type="entry name" value="GlpG_N_sf"/>
</dbReference>
<dbReference type="InterPro" id="IPR022732">
    <property type="entry name" value="Peptidase_S54_GlpG_N"/>
</dbReference>
<dbReference type="InterPro" id="IPR022764">
    <property type="entry name" value="Peptidase_S54_rhomboid_dom"/>
</dbReference>
<dbReference type="InterPro" id="IPR035952">
    <property type="entry name" value="Rhomboid-like_sf"/>
</dbReference>
<dbReference type="InterPro" id="IPR023662">
    <property type="entry name" value="Rhomboid_protease_GlpG"/>
</dbReference>
<dbReference type="NCBIfam" id="NF008155">
    <property type="entry name" value="PRK10907.1"/>
    <property type="match status" value="1"/>
</dbReference>
<dbReference type="NCBIfam" id="TIGR04239">
    <property type="entry name" value="rhombo_GlpG"/>
    <property type="match status" value="1"/>
</dbReference>
<dbReference type="PANTHER" id="PTHR43066:SF26">
    <property type="entry name" value="RHOMBOID PROTEASE GLPG"/>
    <property type="match status" value="1"/>
</dbReference>
<dbReference type="PANTHER" id="PTHR43066">
    <property type="entry name" value="RHOMBOID-RELATED PROTEIN"/>
    <property type="match status" value="1"/>
</dbReference>
<dbReference type="Pfam" id="PF01694">
    <property type="entry name" value="Rhomboid"/>
    <property type="match status" value="1"/>
</dbReference>
<dbReference type="Pfam" id="PF12122">
    <property type="entry name" value="Rhomboid_N"/>
    <property type="match status" value="1"/>
</dbReference>
<dbReference type="SUPFAM" id="SSF144091">
    <property type="entry name" value="Rhomboid-like"/>
    <property type="match status" value="1"/>
</dbReference>
<reference key="1">
    <citation type="journal article" date="2006" name="BMC Genomics">
        <title>Complete genome sequence of Shigella flexneri 5b and comparison with Shigella flexneri 2a.</title>
        <authorList>
            <person name="Nie H."/>
            <person name="Yang F."/>
            <person name="Zhang X."/>
            <person name="Yang J."/>
            <person name="Chen L."/>
            <person name="Wang J."/>
            <person name="Xiong Z."/>
            <person name="Peng J."/>
            <person name="Sun L."/>
            <person name="Dong J."/>
            <person name="Xue Y."/>
            <person name="Xu X."/>
            <person name="Chen S."/>
            <person name="Yao Z."/>
            <person name="Shen Y."/>
            <person name="Jin Q."/>
        </authorList>
    </citation>
    <scope>NUCLEOTIDE SEQUENCE [LARGE SCALE GENOMIC DNA]</scope>
    <source>
        <strain>8401</strain>
    </source>
</reference>
<gene>
    <name evidence="1" type="primary">glpG</name>
    <name type="ordered locus">SFV_3431</name>
</gene>
<protein>
    <recommendedName>
        <fullName evidence="1">Rhomboid protease GlpG</fullName>
        <ecNumber evidence="1">3.4.21.105</ecNumber>
    </recommendedName>
    <alternativeName>
        <fullName evidence="1">Intramembrane serine protease</fullName>
    </alternativeName>
</protein>
<name>GLPG_SHIF8</name>
<accession>Q0SZP2</accession>
<evidence type="ECO:0000255" key="1">
    <source>
        <dbReference type="HAMAP-Rule" id="MF_01594"/>
    </source>
</evidence>
<evidence type="ECO:0000305" key="2"/>
<keyword id="KW-0997">Cell inner membrane</keyword>
<keyword id="KW-1003">Cell membrane</keyword>
<keyword id="KW-0378">Hydrolase</keyword>
<keyword id="KW-0472">Membrane</keyword>
<keyword id="KW-0645">Protease</keyword>
<keyword id="KW-0720">Serine protease</keyword>
<keyword id="KW-0812">Transmembrane</keyword>
<keyword id="KW-1133">Transmembrane helix</keyword>
<sequence>MLMITSFANPRVAQAFVDYMATQGVILTIQQHNQSDVWLADESQAERVRAELARFLENPADPRYLAASWLAGHTGSGLHYRRYPFFAALRERAGPVTWVMMIACVVVFIAMQILGDQEVMLWLAWPFDPTLKFEFWRYFTHALMHFSLMHILFNLLWWWYLGGAVEKRLGSGKLIVITLISALLSGYVQQKFSGPWFGGLSGVVYALMGYVWLRGERDPQSGIYLQRGLIIFALIWIVAGWFDLFGMSMANGAHIAGLAVGLAMAFVDSLNARKRK</sequence>
<comment type="function">
    <text evidence="1">Rhomboid-type serine protease that catalyzes intramembrane proteolysis.</text>
</comment>
<comment type="catalytic activity">
    <reaction evidence="1">
        <text>Cleaves type-1 transmembrane domains using a catalytic dyad composed of serine and histidine that are contributed by different transmembrane domains.</text>
        <dbReference type="EC" id="3.4.21.105"/>
    </reaction>
</comment>
<comment type="subcellular location">
    <subcellularLocation>
        <location evidence="1">Cell inner membrane</location>
        <topology evidence="1">Multi-pass membrane protein</topology>
    </subcellularLocation>
</comment>
<comment type="similarity">
    <text evidence="1">Belongs to the peptidase S54 family.</text>
</comment>
<comment type="sequence caution" evidence="2">
    <conflict type="erroneous initiation">
        <sequence resource="EMBL-CDS" id="ABF05473"/>
    </conflict>
</comment>
<proteinExistence type="inferred from homology"/>
<organism>
    <name type="scientific">Shigella flexneri serotype 5b (strain 8401)</name>
    <dbReference type="NCBI Taxonomy" id="373384"/>
    <lineage>
        <taxon>Bacteria</taxon>
        <taxon>Pseudomonadati</taxon>
        <taxon>Pseudomonadota</taxon>
        <taxon>Gammaproteobacteria</taxon>
        <taxon>Enterobacterales</taxon>
        <taxon>Enterobacteriaceae</taxon>
        <taxon>Shigella</taxon>
    </lineage>
</organism>
<feature type="chain" id="PRO_0000321696" description="Rhomboid protease GlpG">
    <location>
        <begin position="1"/>
        <end position="276"/>
    </location>
</feature>
<feature type="transmembrane region" description="Helical" evidence="1">
    <location>
        <begin position="94"/>
        <end position="114"/>
    </location>
</feature>
<feature type="transmembrane region" description="Helical" evidence="1">
    <location>
        <begin position="142"/>
        <end position="162"/>
    </location>
</feature>
<feature type="transmembrane region" description="Helical" evidence="1">
    <location>
        <begin position="169"/>
        <end position="189"/>
    </location>
</feature>
<feature type="transmembrane region" description="Helical" evidence="1">
    <location>
        <begin position="192"/>
        <end position="212"/>
    </location>
</feature>
<feature type="transmembrane region" description="Helical" evidence="1">
    <location>
        <begin position="229"/>
        <end position="249"/>
    </location>
</feature>
<feature type="transmembrane region" description="Helical" evidence="1">
    <location>
        <begin position="250"/>
        <end position="270"/>
    </location>
</feature>
<feature type="active site" description="Nucleophile" evidence="1">
    <location>
        <position position="201"/>
    </location>
</feature>
<feature type="active site" evidence="1">
    <location>
        <position position="254"/>
    </location>
</feature>